<protein>
    <recommendedName>
        <fullName>Putative F-box protein At1g32420</fullName>
    </recommendedName>
</protein>
<keyword id="KW-1185">Reference proteome</keyword>
<name>FB30_ARATH</name>
<accession>Q9LQL5</accession>
<evidence type="ECO:0000255" key="1">
    <source>
        <dbReference type="PROSITE-ProRule" id="PRU00080"/>
    </source>
</evidence>
<evidence type="ECO:0000256" key="2">
    <source>
        <dbReference type="SAM" id="MobiDB-lite"/>
    </source>
</evidence>
<gene>
    <name type="ordered locus">At1g32420</name>
    <name type="ORF">F5D14.20</name>
</gene>
<proteinExistence type="predicted"/>
<feature type="chain" id="PRO_0000283306" description="Putative F-box protein At1g32420">
    <location>
        <begin position="1"/>
        <end position="302"/>
    </location>
</feature>
<feature type="domain" description="F-box" evidence="1">
    <location>
        <begin position="31"/>
        <end position="78"/>
    </location>
</feature>
<feature type="region of interest" description="Disordered" evidence="2">
    <location>
        <begin position="1"/>
        <end position="27"/>
    </location>
</feature>
<feature type="compositionally biased region" description="Basic and acidic residues" evidence="2">
    <location>
        <begin position="1"/>
        <end position="10"/>
    </location>
</feature>
<sequence>MKRGNEENNHKTSSSSSTQRLSRRKISAGEKSGNVNIPLDLTVEILKKLPAKSLLRFQCVSKQWLSIISSRRDFIDSIVTRSLTQPPPRDIKLIFHHQVLYPGPHFFIFSSTYPQNTDKESLTTRASSYHYVRGLICCWSHCPTTVDIYNPTTRQYYTVPDTNRYQYIETCFFGYDPVENQYKVMVLPKYYMEESPCQVFTVGDPIEKPWRDIQGIGVHFLLKDAVCINGVIYYQATNEYGSTYFLVSFDVRSEKFNHVKAPKILTDHPCTLINYQGKLGLIMCCKKGLEIWVMEDAEKKQD</sequence>
<organism>
    <name type="scientific">Arabidopsis thaliana</name>
    <name type="common">Mouse-ear cress</name>
    <dbReference type="NCBI Taxonomy" id="3702"/>
    <lineage>
        <taxon>Eukaryota</taxon>
        <taxon>Viridiplantae</taxon>
        <taxon>Streptophyta</taxon>
        <taxon>Embryophyta</taxon>
        <taxon>Tracheophyta</taxon>
        <taxon>Spermatophyta</taxon>
        <taxon>Magnoliopsida</taxon>
        <taxon>eudicotyledons</taxon>
        <taxon>Gunneridae</taxon>
        <taxon>Pentapetalae</taxon>
        <taxon>rosids</taxon>
        <taxon>malvids</taxon>
        <taxon>Brassicales</taxon>
        <taxon>Brassicaceae</taxon>
        <taxon>Camelineae</taxon>
        <taxon>Arabidopsis</taxon>
    </lineage>
</organism>
<dbReference type="EMBL" id="AC007767">
    <property type="protein sequence ID" value="AAF81340.1"/>
    <property type="molecule type" value="Genomic_DNA"/>
</dbReference>
<dbReference type="EMBL" id="CP002684">
    <property type="protein sequence ID" value="AEE31485.1"/>
    <property type="molecule type" value="Genomic_DNA"/>
</dbReference>
<dbReference type="PIR" id="D86449">
    <property type="entry name" value="D86449"/>
</dbReference>
<dbReference type="RefSeq" id="NP_174520.1">
    <property type="nucleotide sequence ID" value="NM_102977.1"/>
</dbReference>
<dbReference type="SMR" id="Q9LQL5"/>
<dbReference type="FunCoup" id="Q9LQL5">
    <property type="interactions" value="2"/>
</dbReference>
<dbReference type="STRING" id="3702.Q9LQL5"/>
<dbReference type="PaxDb" id="3702-AT1G32420.1"/>
<dbReference type="EnsemblPlants" id="AT1G32420.1">
    <property type="protein sequence ID" value="AT1G32420.1"/>
    <property type="gene ID" value="AT1G32420"/>
</dbReference>
<dbReference type="GeneID" id="840136"/>
<dbReference type="Gramene" id="AT1G32420.1">
    <property type="protein sequence ID" value="AT1G32420.1"/>
    <property type="gene ID" value="AT1G32420"/>
</dbReference>
<dbReference type="KEGG" id="ath:AT1G32420"/>
<dbReference type="Araport" id="AT1G32420"/>
<dbReference type="TAIR" id="AT1G32420"/>
<dbReference type="eggNOG" id="ENOG502SNHU">
    <property type="taxonomic scope" value="Eukaryota"/>
</dbReference>
<dbReference type="HOGENOM" id="CLU_027176_8_2_1"/>
<dbReference type="InParanoid" id="Q9LQL5"/>
<dbReference type="OMA" id="GNEENNH"/>
<dbReference type="PhylomeDB" id="Q9LQL5"/>
<dbReference type="PRO" id="PR:Q9LQL5"/>
<dbReference type="Proteomes" id="UP000006548">
    <property type="component" value="Chromosome 1"/>
</dbReference>
<dbReference type="ExpressionAtlas" id="Q9LQL5">
    <property type="expression patterns" value="baseline"/>
</dbReference>
<dbReference type="CDD" id="cd22157">
    <property type="entry name" value="F-box_AtFBW1-like"/>
    <property type="match status" value="1"/>
</dbReference>
<dbReference type="Gene3D" id="1.20.1280.50">
    <property type="match status" value="1"/>
</dbReference>
<dbReference type="InterPro" id="IPR013187">
    <property type="entry name" value="F-box-assoc_dom_typ3"/>
</dbReference>
<dbReference type="InterPro" id="IPR017451">
    <property type="entry name" value="F-box-assoc_interact_dom"/>
</dbReference>
<dbReference type="InterPro" id="IPR036047">
    <property type="entry name" value="F-box-like_dom_sf"/>
</dbReference>
<dbReference type="InterPro" id="IPR001810">
    <property type="entry name" value="F-box_dom"/>
</dbReference>
<dbReference type="NCBIfam" id="TIGR01640">
    <property type="entry name" value="F_box_assoc_1"/>
    <property type="match status" value="1"/>
</dbReference>
<dbReference type="PANTHER" id="PTHR31111">
    <property type="entry name" value="BNAA05G37150D PROTEIN-RELATED"/>
    <property type="match status" value="1"/>
</dbReference>
<dbReference type="PANTHER" id="PTHR31111:SF58">
    <property type="entry name" value="F-BOX DOMAIN-CONTAINING PROTEIN"/>
    <property type="match status" value="1"/>
</dbReference>
<dbReference type="Pfam" id="PF00646">
    <property type="entry name" value="F-box"/>
    <property type="match status" value="1"/>
</dbReference>
<dbReference type="Pfam" id="PF08268">
    <property type="entry name" value="FBA_3"/>
    <property type="match status" value="1"/>
</dbReference>
<dbReference type="SMART" id="SM00256">
    <property type="entry name" value="FBOX"/>
    <property type="match status" value="1"/>
</dbReference>
<dbReference type="SUPFAM" id="SSF81383">
    <property type="entry name" value="F-box domain"/>
    <property type="match status" value="1"/>
</dbReference>
<dbReference type="PROSITE" id="PS50181">
    <property type="entry name" value="FBOX"/>
    <property type="match status" value="1"/>
</dbReference>
<reference key="1">
    <citation type="journal article" date="2000" name="Nature">
        <title>Sequence and analysis of chromosome 1 of the plant Arabidopsis thaliana.</title>
        <authorList>
            <person name="Theologis A."/>
            <person name="Ecker J.R."/>
            <person name="Palm C.J."/>
            <person name="Federspiel N.A."/>
            <person name="Kaul S."/>
            <person name="White O."/>
            <person name="Alonso J."/>
            <person name="Altafi H."/>
            <person name="Araujo R."/>
            <person name="Bowman C.L."/>
            <person name="Brooks S.Y."/>
            <person name="Buehler E."/>
            <person name="Chan A."/>
            <person name="Chao Q."/>
            <person name="Chen H."/>
            <person name="Cheuk R.F."/>
            <person name="Chin C.W."/>
            <person name="Chung M.K."/>
            <person name="Conn L."/>
            <person name="Conway A.B."/>
            <person name="Conway A.R."/>
            <person name="Creasy T.H."/>
            <person name="Dewar K."/>
            <person name="Dunn P."/>
            <person name="Etgu P."/>
            <person name="Feldblyum T.V."/>
            <person name="Feng J.-D."/>
            <person name="Fong B."/>
            <person name="Fujii C.Y."/>
            <person name="Gill J.E."/>
            <person name="Goldsmith A.D."/>
            <person name="Haas B."/>
            <person name="Hansen N.F."/>
            <person name="Hughes B."/>
            <person name="Huizar L."/>
            <person name="Hunter J.L."/>
            <person name="Jenkins J."/>
            <person name="Johnson-Hopson C."/>
            <person name="Khan S."/>
            <person name="Khaykin E."/>
            <person name="Kim C.J."/>
            <person name="Koo H.L."/>
            <person name="Kremenetskaia I."/>
            <person name="Kurtz D.B."/>
            <person name="Kwan A."/>
            <person name="Lam B."/>
            <person name="Langin-Hooper S."/>
            <person name="Lee A."/>
            <person name="Lee J.M."/>
            <person name="Lenz C.A."/>
            <person name="Li J.H."/>
            <person name="Li Y.-P."/>
            <person name="Lin X."/>
            <person name="Liu S.X."/>
            <person name="Liu Z.A."/>
            <person name="Luros J.S."/>
            <person name="Maiti R."/>
            <person name="Marziali A."/>
            <person name="Militscher J."/>
            <person name="Miranda M."/>
            <person name="Nguyen M."/>
            <person name="Nierman W.C."/>
            <person name="Osborne B.I."/>
            <person name="Pai G."/>
            <person name="Peterson J."/>
            <person name="Pham P.K."/>
            <person name="Rizzo M."/>
            <person name="Rooney T."/>
            <person name="Rowley D."/>
            <person name="Sakano H."/>
            <person name="Salzberg S.L."/>
            <person name="Schwartz J.R."/>
            <person name="Shinn P."/>
            <person name="Southwick A.M."/>
            <person name="Sun H."/>
            <person name="Tallon L.J."/>
            <person name="Tambunga G."/>
            <person name="Toriumi M.J."/>
            <person name="Town C.D."/>
            <person name="Utterback T."/>
            <person name="Van Aken S."/>
            <person name="Vaysberg M."/>
            <person name="Vysotskaia V.S."/>
            <person name="Walker M."/>
            <person name="Wu D."/>
            <person name="Yu G."/>
            <person name="Fraser C.M."/>
            <person name="Venter J.C."/>
            <person name="Davis R.W."/>
        </authorList>
    </citation>
    <scope>NUCLEOTIDE SEQUENCE [LARGE SCALE GENOMIC DNA]</scope>
    <source>
        <strain>cv. Columbia</strain>
    </source>
</reference>
<reference key="2">
    <citation type="journal article" date="2017" name="Plant J.">
        <title>Araport11: a complete reannotation of the Arabidopsis thaliana reference genome.</title>
        <authorList>
            <person name="Cheng C.Y."/>
            <person name="Krishnakumar V."/>
            <person name="Chan A.P."/>
            <person name="Thibaud-Nissen F."/>
            <person name="Schobel S."/>
            <person name="Town C.D."/>
        </authorList>
    </citation>
    <scope>GENOME REANNOTATION</scope>
    <source>
        <strain>cv. Columbia</strain>
    </source>
</reference>